<sequence>MGAYKYMQELWRKKQSNVMRFLLRVRCWQYRQLSSLHRAPRPTRPDKARRLGYKAKQGYVIYRIRVRRGGRKRPVPKGATYGKPVHHGVNQIKFARSLQSVAEERAGRHCGGLRVLNSYWVGEDSTYKFFEVILIDTFHKAIRRNPDTQWITKAVRKHREMRGLTSAGKKSRGLGKGHKFHLTIGGSRRAAWKRRNTLQLHRYR</sequence>
<name>RL15_HYPMO</name>
<comment type="function">
    <text evidence="2">Component of the large ribosomal subunit. The ribosome is a large ribonucleoprotein complex responsible for the synthesis of proteins in the cell.</text>
</comment>
<comment type="subunit">
    <text evidence="2">Component of the large ribosomal subunit.</text>
</comment>
<comment type="subcellular location">
    <subcellularLocation>
        <location evidence="2">Cytoplasm</location>
    </subcellularLocation>
</comment>
<comment type="similarity">
    <text evidence="3">Belongs to the eukaryotic ribosomal protein eL15 family.</text>
</comment>
<keyword id="KW-0963">Cytoplasm</keyword>
<keyword id="KW-0687">Ribonucleoprotein</keyword>
<keyword id="KW-0689">Ribosomal protein</keyword>
<evidence type="ECO:0000250" key="1"/>
<evidence type="ECO:0000250" key="2">
    <source>
        <dbReference type="UniProtKB" id="P61313"/>
    </source>
</evidence>
<evidence type="ECO:0000305" key="3"/>
<organism>
    <name type="scientific">Hypophthalmichthys molitrix</name>
    <name type="common">Silver carp</name>
    <name type="synonym">Leuciscus molitrix</name>
    <dbReference type="NCBI Taxonomy" id="13095"/>
    <lineage>
        <taxon>Eukaryota</taxon>
        <taxon>Metazoa</taxon>
        <taxon>Chordata</taxon>
        <taxon>Craniata</taxon>
        <taxon>Vertebrata</taxon>
        <taxon>Euteleostomi</taxon>
        <taxon>Actinopterygii</taxon>
        <taxon>Neopterygii</taxon>
        <taxon>Teleostei</taxon>
        <taxon>Ostariophysi</taxon>
        <taxon>Cypriniformes</taxon>
        <taxon>Xenocyprididae</taxon>
        <taxon>Xenocypridinae</taxon>
        <taxon>Hypophthalmichthys</taxon>
    </lineage>
</organism>
<dbReference type="EMBL" id="AY249416">
    <property type="protein sequence ID" value="AAP35253.1"/>
    <property type="molecule type" value="mRNA"/>
</dbReference>
<dbReference type="SMR" id="Q7T3N6"/>
<dbReference type="GO" id="GO:0022625">
    <property type="term" value="C:cytosolic large ribosomal subunit"/>
    <property type="evidence" value="ECO:0007669"/>
    <property type="project" value="TreeGrafter"/>
</dbReference>
<dbReference type="GO" id="GO:0003723">
    <property type="term" value="F:RNA binding"/>
    <property type="evidence" value="ECO:0007669"/>
    <property type="project" value="TreeGrafter"/>
</dbReference>
<dbReference type="GO" id="GO:0003735">
    <property type="term" value="F:structural constituent of ribosome"/>
    <property type="evidence" value="ECO:0007669"/>
    <property type="project" value="InterPro"/>
</dbReference>
<dbReference type="GO" id="GO:0002181">
    <property type="term" value="P:cytoplasmic translation"/>
    <property type="evidence" value="ECO:0007669"/>
    <property type="project" value="TreeGrafter"/>
</dbReference>
<dbReference type="FunFam" id="3.40.1120.10:FF:000001">
    <property type="entry name" value="Ribosomal protein L15"/>
    <property type="match status" value="1"/>
</dbReference>
<dbReference type="Gene3D" id="3.40.1120.10">
    <property type="entry name" value="Ribosomal protein l15e"/>
    <property type="match status" value="1"/>
</dbReference>
<dbReference type="InterPro" id="IPR024794">
    <property type="entry name" value="Rbsml_eL15_core_dom_sf"/>
</dbReference>
<dbReference type="InterPro" id="IPR000439">
    <property type="entry name" value="Ribosomal_eL15"/>
</dbReference>
<dbReference type="InterPro" id="IPR020925">
    <property type="entry name" value="Ribosomal_eL15_CS"/>
</dbReference>
<dbReference type="InterPro" id="IPR012678">
    <property type="entry name" value="Ribosomal_uL23/eL15/eS24_sf"/>
</dbReference>
<dbReference type="NCBIfam" id="NF003269">
    <property type="entry name" value="PRK04243.1"/>
    <property type="match status" value="1"/>
</dbReference>
<dbReference type="PANTHER" id="PTHR11847:SF4">
    <property type="entry name" value="LARGE RIBOSOMAL SUBUNIT PROTEIN EL15"/>
    <property type="match status" value="1"/>
</dbReference>
<dbReference type="PANTHER" id="PTHR11847">
    <property type="entry name" value="RIBOSOMAL PROTEIN L15"/>
    <property type="match status" value="1"/>
</dbReference>
<dbReference type="Pfam" id="PF00827">
    <property type="entry name" value="Ribosomal_L15e"/>
    <property type="match status" value="1"/>
</dbReference>
<dbReference type="SMART" id="SM01384">
    <property type="entry name" value="Ribosomal_L15e"/>
    <property type="match status" value="1"/>
</dbReference>
<dbReference type="SUPFAM" id="SSF54189">
    <property type="entry name" value="Ribosomal proteins S24e, L23 and L15e"/>
    <property type="match status" value="1"/>
</dbReference>
<dbReference type="PROSITE" id="PS01194">
    <property type="entry name" value="RIBOSOMAL_L15E"/>
    <property type="match status" value="1"/>
</dbReference>
<proteinExistence type="evidence at transcript level"/>
<gene>
    <name type="primary">rpl15</name>
</gene>
<protein>
    <recommendedName>
        <fullName evidence="3">Large ribosomal subunit protein eL15</fullName>
    </recommendedName>
    <alternativeName>
        <fullName>60S ribosomal protein L15</fullName>
    </alternativeName>
</protein>
<accession>Q7T3N6</accession>
<reference key="1">
    <citation type="submission" date="2003-03" db="EMBL/GenBank/DDBJ databases">
        <title>Evaluating the potential of ribosomal protein L15 as a novel marker for phylogenetic analysis: a comparative analysis of 15 teleost RPL15 cDNAs.</title>
        <authorList>
            <person name="Song P."/>
            <person name="Zhang J."/>
            <person name="Xiang Z."/>
        </authorList>
    </citation>
    <scope>NUCLEOTIDE SEQUENCE [MRNA]</scope>
    <source>
        <tissue>Liver</tissue>
    </source>
</reference>
<feature type="initiator methionine" description="Removed" evidence="1">
    <location>
        <position position="1"/>
    </location>
</feature>
<feature type="chain" id="PRO_0000127539" description="Large ribosomal subunit protein eL15">
    <location>
        <begin position="2"/>
        <end position="204"/>
    </location>
</feature>